<comment type="function">
    <text evidence="2">Exerts both phospholipase and triglyceride lipase activities (By similarity). More active as a phospholipase than a triglyceride lipase (By similarity). Hydrolyzes triglycerides, both with short-chain fatty acyl groups (tributyrin) and long-chain fatty acyl groups (triolein) with similar levels of activity toward both types of substrates (By similarity). Hydrolyzes high density lipoproteins (HDL) more efficiently than other lipoproteins (By similarity).</text>
</comment>
<comment type="catalytic activity">
    <reaction evidence="2">
        <text>a triacylglycerol + H2O = a diacylglycerol + a fatty acid + H(+)</text>
        <dbReference type="Rhea" id="RHEA:12044"/>
        <dbReference type="ChEBI" id="CHEBI:15377"/>
        <dbReference type="ChEBI" id="CHEBI:15378"/>
        <dbReference type="ChEBI" id="CHEBI:17855"/>
        <dbReference type="ChEBI" id="CHEBI:18035"/>
        <dbReference type="ChEBI" id="CHEBI:28868"/>
        <dbReference type="EC" id="3.1.1.3"/>
    </reaction>
</comment>
<comment type="catalytic activity">
    <reaction evidence="2">
        <text>a 1,2-diacyl-sn-glycero-3-phosphocholine + H2O = a 2-acyl-sn-glycero-3-phosphocholine + a fatty acid + H(+)</text>
        <dbReference type="Rhea" id="RHEA:18689"/>
        <dbReference type="ChEBI" id="CHEBI:15377"/>
        <dbReference type="ChEBI" id="CHEBI:15378"/>
        <dbReference type="ChEBI" id="CHEBI:28868"/>
        <dbReference type="ChEBI" id="CHEBI:57643"/>
        <dbReference type="ChEBI" id="CHEBI:57875"/>
        <dbReference type="EC" id="3.1.1.32"/>
    </reaction>
</comment>
<comment type="catalytic activity">
    <reaction evidence="2">
        <text>1,2,3-tri-(9Z-octadecenoyl)-glycerol + H2O = di-(9Z)-octadecenoylglycerol + (9Z)-octadecenoate + H(+)</text>
        <dbReference type="Rhea" id="RHEA:38575"/>
        <dbReference type="ChEBI" id="CHEBI:15377"/>
        <dbReference type="ChEBI" id="CHEBI:15378"/>
        <dbReference type="ChEBI" id="CHEBI:30823"/>
        <dbReference type="ChEBI" id="CHEBI:53753"/>
        <dbReference type="ChEBI" id="CHEBI:75945"/>
    </reaction>
    <physiologicalReaction direction="left-to-right" evidence="2">
        <dbReference type="Rhea" id="RHEA:38576"/>
    </physiologicalReaction>
</comment>
<comment type="catalytic activity">
    <reaction evidence="2">
        <text>1,2,3-tributanoylglycerol + H2O = dibutanoylglycerol + butanoate + H(+)</text>
        <dbReference type="Rhea" id="RHEA:40475"/>
        <dbReference type="ChEBI" id="CHEBI:15377"/>
        <dbReference type="ChEBI" id="CHEBI:15378"/>
        <dbReference type="ChEBI" id="CHEBI:17968"/>
        <dbReference type="ChEBI" id="CHEBI:35020"/>
        <dbReference type="ChEBI" id="CHEBI:76478"/>
    </reaction>
    <physiologicalReaction direction="left-to-right" evidence="2">
        <dbReference type="Rhea" id="RHEA:40476"/>
    </physiologicalReaction>
</comment>
<comment type="catalytic activity">
    <reaction evidence="2">
        <text>1,2-dihexadecanoyl-sn-glycero-3-phosphocholine + H2O = hexadecanoyl-sn-glycero-3-phosphocholine + hexadecanoate + H(+)</text>
        <dbReference type="Rhea" id="RHEA:41384"/>
        <dbReference type="ChEBI" id="CHEBI:7896"/>
        <dbReference type="ChEBI" id="CHEBI:15377"/>
        <dbReference type="ChEBI" id="CHEBI:15378"/>
        <dbReference type="ChEBI" id="CHEBI:64563"/>
        <dbReference type="ChEBI" id="CHEBI:72999"/>
    </reaction>
    <physiologicalReaction direction="left-to-right" evidence="2">
        <dbReference type="Rhea" id="RHEA:41385"/>
    </physiologicalReaction>
</comment>
<comment type="subunit">
    <text evidence="2">Head to tail Homodimer. Interacts with apolipoprotein C-2 (By similarity).</text>
</comment>
<comment type="subcellular location">
    <subcellularLocation>
        <location evidence="2">Secreted</location>
    </subcellularLocation>
</comment>
<comment type="miscellaneous">
    <text>It is termed endothelial lipase due to the fact that it is synthesized in endothelial cells, a characteristic that distinguishes it from other members of the family. However, this protein is also expressed in other cell types.</text>
</comment>
<comment type="similarity">
    <text evidence="6">Belongs to the AB hydrolase superfamily. Lipase family.</text>
</comment>
<organism>
    <name type="scientific">Rattus norvegicus</name>
    <name type="common">Rat</name>
    <dbReference type="NCBI Taxonomy" id="10116"/>
    <lineage>
        <taxon>Eukaryota</taxon>
        <taxon>Metazoa</taxon>
        <taxon>Chordata</taxon>
        <taxon>Craniata</taxon>
        <taxon>Vertebrata</taxon>
        <taxon>Euteleostomi</taxon>
        <taxon>Mammalia</taxon>
        <taxon>Eutheria</taxon>
        <taxon>Euarchontoglires</taxon>
        <taxon>Glires</taxon>
        <taxon>Rodentia</taxon>
        <taxon>Myomorpha</taxon>
        <taxon>Muroidea</taxon>
        <taxon>Muridae</taxon>
        <taxon>Murinae</taxon>
        <taxon>Rattus</taxon>
    </lineage>
</organism>
<keyword id="KW-1015">Disulfide bond</keyword>
<keyword id="KW-0325">Glycoprotein</keyword>
<keyword id="KW-0358">Heparin-binding</keyword>
<keyword id="KW-0378">Hydrolase</keyword>
<keyword id="KW-0442">Lipid degradation</keyword>
<keyword id="KW-0443">Lipid metabolism</keyword>
<keyword id="KW-1185">Reference proteome</keyword>
<keyword id="KW-0964">Secreted</keyword>
<keyword id="KW-0732">Signal</keyword>
<gene>
    <name type="primary">Lipg</name>
</gene>
<evidence type="ECO:0000250" key="1"/>
<evidence type="ECO:0000250" key="2">
    <source>
        <dbReference type="UniProtKB" id="Q9Y5X9"/>
    </source>
</evidence>
<evidence type="ECO:0000255" key="3"/>
<evidence type="ECO:0000255" key="4">
    <source>
        <dbReference type="PROSITE-ProRule" id="PRU00152"/>
    </source>
</evidence>
<evidence type="ECO:0000255" key="5">
    <source>
        <dbReference type="PROSITE-ProRule" id="PRU10037"/>
    </source>
</evidence>
<evidence type="ECO:0000305" key="6"/>
<sequence>MRDPVFLLGFWSLYCCFPAGSLTTLRPQGSLRDEHHKPTGVPVTITTKPSVTFNIRTSKDPEHEGCNLSLGDSKLLENCGFNMTAKTFFIIHGWTMSGMFESWLHKLVSALQTREKEANVVVVDWLPLAHQLYIDAVSNTRVVGRRVAGMLNWLQEKGEFSLGDVHLIGYSLGAHVAGYAGNFVKGTVGRITGLDPAGPMFEGVDINRRLSPDDADFVDVLHTYTLSFGLSIGIRMPVGHIDIYPNGGDFQPGCGFNDVMGSFAYGTISEMVKCEHERAVHLFVDSLVNQDKPSFAFQCTDPNRFKRGICLSCRKNRCNNIGYNAKKMRKKRNSKMYLKTRAGMPFRVYHYQLKVHMFSYKNSGDIQPDLYITLYGSNADSQNLPLEIVEKIELNATNTFLVYTEEYLGDLFKIRLTWEGVSSSWYNLWNEFRSYLSQPSSPSRELHIRRIRVKSGETQRKVAFCVQDPMKNSISPGQELWFYKCQNDCRVKN</sequence>
<feature type="signal peptide" evidence="3">
    <location>
        <begin position="1"/>
        <end position="23"/>
    </location>
</feature>
<feature type="chain" id="PRO_0000043409" description="Endothelial lipase">
    <location>
        <begin position="24"/>
        <end position="493"/>
    </location>
</feature>
<feature type="domain" description="PLAT" evidence="4">
    <location>
        <begin position="349"/>
        <end position="484"/>
    </location>
</feature>
<feature type="active site" description="Nucleophile" evidence="1">
    <location>
        <position position="171"/>
    </location>
</feature>
<feature type="active site" description="Charge relay system" evidence="5">
    <location>
        <position position="195"/>
    </location>
</feature>
<feature type="active site" description="Charge relay system" evidence="5">
    <location>
        <position position="276"/>
    </location>
</feature>
<feature type="binding site" evidence="1">
    <location>
        <begin position="327"/>
        <end position="339"/>
    </location>
    <ligand>
        <name>heparin</name>
        <dbReference type="ChEBI" id="CHEBI:28304"/>
    </ligand>
</feature>
<feature type="glycosylation site" description="N-linked (GlcNAc...) asparagine" evidence="3">
    <location>
        <position position="67"/>
    </location>
</feature>
<feature type="glycosylation site" description="N-linked (GlcNAc...) asparagine" evidence="3">
    <location>
        <position position="82"/>
    </location>
</feature>
<feature type="glycosylation site" description="N-linked (GlcNAc...) asparagine" evidence="3">
    <location>
        <position position="395"/>
    </location>
</feature>
<feature type="disulfide bond" evidence="4">
    <location>
        <begin position="66"/>
        <end position="79"/>
    </location>
</feature>
<feature type="disulfide bond" evidence="4">
    <location>
        <begin position="254"/>
        <end position="274"/>
    </location>
</feature>
<feature type="disulfide bond" evidence="4">
    <location>
        <begin position="299"/>
        <end position="318"/>
    </location>
</feature>
<feature type="disulfide bond" evidence="4">
    <location>
        <begin position="310"/>
        <end position="313"/>
    </location>
</feature>
<feature type="disulfide bond" evidence="4">
    <location>
        <begin position="465"/>
        <end position="485"/>
    </location>
</feature>
<feature type="sequence conflict" description="In Ref. 2; AAK14774/AAK14775." evidence="6" ref="2">
    <original>EHE</original>
    <variation>KHK</variation>
    <location>
        <begin position="275"/>
        <end position="277"/>
    </location>
</feature>
<protein>
    <recommendedName>
        <fullName>Endothelial lipase</fullName>
        <ecNumber evidence="2">3.1.1.3</ecNumber>
    </recommendedName>
    <alternativeName>
        <fullName>Endothelial-derived lipase</fullName>
        <shortName>EDL</shortName>
    </alternativeName>
    <alternativeName>
        <fullName>Phospholipase A1</fullName>
        <ecNumber evidence="2">3.1.1.32</ecNumber>
    </alternativeName>
</protein>
<dbReference type="EC" id="3.1.1.3" evidence="2"/>
<dbReference type="EC" id="3.1.1.32" evidence="2"/>
<dbReference type="EMBL" id="AY916123">
    <property type="protein sequence ID" value="AAX11354.1"/>
    <property type="molecule type" value="mRNA"/>
</dbReference>
<dbReference type="EMBL" id="AY027561">
    <property type="protein sequence ID" value="AAK14774.1"/>
    <property type="molecule type" value="Genomic_DNA"/>
</dbReference>
<dbReference type="EMBL" id="AY027562">
    <property type="protein sequence ID" value="AAK14775.1"/>
    <property type="molecule type" value="Genomic_DNA"/>
</dbReference>
<dbReference type="RefSeq" id="NP_001012759.1">
    <property type="nucleotide sequence ID" value="NM_001012741.2"/>
</dbReference>
<dbReference type="SMR" id="Q8VBX1"/>
<dbReference type="FunCoup" id="Q8VBX1">
    <property type="interactions" value="179"/>
</dbReference>
<dbReference type="STRING" id="10116.ENSRNOP00000025257"/>
<dbReference type="BindingDB" id="Q8VBX1"/>
<dbReference type="ChEMBL" id="CHEMBL3638354"/>
<dbReference type="ESTHER" id="ratno-q5d216">
    <property type="family name" value="Lipoprotein_Lipase"/>
</dbReference>
<dbReference type="GlyCosmos" id="Q8VBX1">
    <property type="glycosylation" value="3 sites, No reported glycans"/>
</dbReference>
<dbReference type="GlyGen" id="Q8VBX1">
    <property type="glycosylation" value="3 sites"/>
</dbReference>
<dbReference type="PhosphoSitePlus" id="Q8VBX1"/>
<dbReference type="PaxDb" id="10116-ENSRNOP00000025257"/>
<dbReference type="Ensembl" id="ENSRNOT00000025257.7">
    <property type="protein sequence ID" value="ENSRNOP00000025257.5"/>
    <property type="gene ID" value="ENSRNOG00000018694.7"/>
</dbReference>
<dbReference type="GeneID" id="291437"/>
<dbReference type="KEGG" id="rno:291437"/>
<dbReference type="AGR" id="RGD:1310740"/>
<dbReference type="CTD" id="9388"/>
<dbReference type="RGD" id="1310740">
    <property type="gene designation" value="Lipg"/>
</dbReference>
<dbReference type="eggNOG" id="ENOG502QU8P">
    <property type="taxonomic scope" value="Eukaryota"/>
</dbReference>
<dbReference type="GeneTree" id="ENSGT00940000159394"/>
<dbReference type="HOGENOM" id="CLU_027171_1_2_1"/>
<dbReference type="InParanoid" id="Q8VBX1"/>
<dbReference type="OMA" id="QMPVGHV"/>
<dbReference type="OrthoDB" id="199913at2759"/>
<dbReference type="PhylomeDB" id="Q8VBX1"/>
<dbReference type="TreeFam" id="TF324997"/>
<dbReference type="Reactome" id="R-RNO-8964058">
    <property type="pathway name" value="HDL remodeling"/>
</dbReference>
<dbReference type="PRO" id="PR:Q8VBX1"/>
<dbReference type="Proteomes" id="UP000002494">
    <property type="component" value="Chromosome 18"/>
</dbReference>
<dbReference type="Bgee" id="ENSRNOG00000018694">
    <property type="expression patterns" value="Expressed in ovary and 14 other cell types or tissues"/>
</dbReference>
<dbReference type="GO" id="GO:0009986">
    <property type="term" value="C:cell surface"/>
    <property type="evidence" value="ECO:0000266"/>
    <property type="project" value="RGD"/>
</dbReference>
<dbReference type="GO" id="GO:0005769">
    <property type="term" value="C:early endosome"/>
    <property type="evidence" value="ECO:0000266"/>
    <property type="project" value="RGD"/>
</dbReference>
<dbReference type="GO" id="GO:0005615">
    <property type="term" value="C:extracellular space"/>
    <property type="evidence" value="ECO:0000314"/>
    <property type="project" value="RGD"/>
</dbReference>
<dbReference type="GO" id="GO:0005794">
    <property type="term" value="C:Golgi apparatus"/>
    <property type="evidence" value="ECO:0000266"/>
    <property type="project" value="RGD"/>
</dbReference>
<dbReference type="GO" id="GO:0008201">
    <property type="term" value="F:heparin binding"/>
    <property type="evidence" value="ECO:0007669"/>
    <property type="project" value="UniProtKB-KW"/>
</dbReference>
<dbReference type="GO" id="GO:0004465">
    <property type="term" value="F:lipoprotein lipase activity"/>
    <property type="evidence" value="ECO:0000318"/>
    <property type="project" value="GO_Central"/>
</dbReference>
<dbReference type="GO" id="GO:0008970">
    <property type="term" value="F:phospholipase A1 activity"/>
    <property type="evidence" value="ECO:0000250"/>
    <property type="project" value="UniProtKB"/>
</dbReference>
<dbReference type="GO" id="GO:0004620">
    <property type="term" value="F:phospholipase activity"/>
    <property type="evidence" value="ECO:0000266"/>
    <property type="project" value="RGD"/>
</dbReference>
<dbReference type="GO" id="GO:0004806">
    <property type="term" value="F:triacylglycerol lipase activity"/>
    <property type="evidence" value="ECO:0000250"/>
    <property type="project" value="UniProtKB"/>
</dbReference>
<dbReference type="GO" id="GO:0042632">
    <property type="term" value="P:cholesterol homeostasis"/>
    <property type="evidence" value="ECO:0000266"/>
    <property type="project" value="RGD"/>
</dbReference>
<dbReference type="GO" id="GO:0006633">
    <property type="term" value="P:fatty acid biosynthetic process"/>
    <property type="evidence" value="ECO:0000318"/>
    <property type="project" value="GO_Central"/>
</dbReference>
<dbReference type="GO" id="GO:0034375">
    <property type="term" value="P:high-density lipoprotein particle remodeling"/>
    <property type="evidence" value="ECO:0000266"/>
    <property type="project" value="RGD"/>
</dbReference>
<dbReference type="GO" id="GO:0055091">
    <property type="term" value="P:phospholipid homeostasis"/>
    <property type="evidence" value="ECO:0000266"/>
    <property type="project" value="RGD"/>
</dbReference>
<dbReference type="GO" id="GO:0032376">
    <property type="term" value="P:positive regulation of cholesterol transport"/>
    <property type="evidence" value="ECO:0000266"/>
    <property type="project" value="RGD"/>
</dbReference>
<dbReference type="GO" id="GO:0010983">
    <property type="term" value="P:positive regulation of high-density lipoprotein particle clearance"/>
    <property type="evidence" value="ECO:0000266"/>
    <property type="project" value="RGD"/>
</dbReference>
<dbReference type="GO" id="GO:0050746">
    <property type="term" value="P:regulation of lipoprotein metabolic process"/>
    <property type="evidence" value="ECO:0000266"/>
    <property type="project" value="RGD"/>
</dbReference>
<dbReference type="GO" id="GO:0007584">
    <property type="term" value="P:response to nutrient"/>
    <property type="evidence" value="ECO:0000270"/>
    <property type="project" value="RGD"/>
</dbReference>
<dbReference type="GO" id="GO:0043691">
    <property type="term" value="P:reverse cholesterol transport"/>
    <property type="evidence" value="ECO:0000266"/>
    <property type="project" value="RGD"/>
</dbReference>
<dbReference type="GO" id="GO:0019433">
    <property type="term" value="P:triglyceride catabolic process"/>
    <property type="evidence" value="ECO:0000318"/>
    <property type="project" value="GO_Central"/>
</dbReference>
<dbReference type="CDD" id="cd00707">
    <property type="entry name" value="Pancreat_lipase_like"/>
    <property type="match status" value="1"/>
</dbReference>
<dbReference type="CDD" id="cd01758">
    <property type="entry name" value="PLAT_LPL"/>
    <property type="match status" value="1"/>
</dbReference>
<dbReference type="FunFam" id="2.60.60.20:FF:000014">
    <property type="entry name" value="Endothelial lipase"/>
    <property type="match status" value="1"/>
</dbReference>
<dbReference type="FunFam" id="3.40.50.1820:FF:000109">
    <property type="entry name" value="Lipase, endothelial"/>
    <property type="match status" value="1"/>
</dbReference>
<dbReference type="Gene3D" id="3.40.50.1820">
    <property type="entry name" value="alpha/beta hydrolase"/>
    <property type="match status" value="1"/>
</dbReference>
<dbReference type="Gene3D" id="2.60.60.20">
    <property type="entry name" value="PLAT/LH2 domain"/>
    <property type="match status" value="1"/>
</dbReference>
<dbReference type="InterPro" id="IPR029058">
    <property type="entry name" value="AB_hydrolase_fold"/>
</dbReference>
<dbReference type="InterPro" id="IPR013818">
    <property type="entry name" value="Lipase"/>
</dbReference>
<dbReference type="InterPro" id="IPR016272">
    <property type="entry name" value="Lipase_LIPH"/>
</dbReference>
<dbReference type="InterPro" id="IPR033906">
    <property type="entry name" value="Lipase_N"/>
</dbReference>
<dbReference type="InterPro" id="IPR002330">
    <property type="entry name" value="Lipo_Lipase"/>
</dbReference>
<dbReference type="InterPro" id="IPR001024">
    <property type="entry name" value="PLAT/LH2_dom"/>
</dbReference>
<dbReference type="InterPro" id="IPR036392">
    <property type="entry name" value="PLAT/LH2_dom_sf"/>
</dbReference>
<dbReference type="InterPro" id="IPR000734">
    <property type="entry name" value="TAG_lipase"/>
</dbReference>
<dbReference type="PANTHER" id="PTHR11610:SF13">
    <property type="entry name" value="ENDOTHELIAL LIPASE"/>
    <property type="match status" value="1"/>
</dbReference>
<dbReference type="PANTHER" id="PTHR11610">
    <property type="entry name" value="LIPASE"/>
    <property type="match status" value="1"/>
</dbReference>
<dbReference type="Pfam" id="PF00151">
    <property type="entry name" value="Lipase"/>
    <property type="match status" value="1"/>
</dbReference>
<dbReference type="Pfam" id="PF01477">
    <property type="entry name" value="PLAT"/>
    <property type="match status" value="1"/>
</dbReference>
<dbReference type="PIRSF" id="PIRSF000865">
    <property type="entry name" value="Lipoprotein_lipase_LIPH"/>
    <property type="match status" value="1"/>
</dbReference>
<dbReference type="PRINTS" id="PR00822">
    <property type="entry name" value="LIPOLIPASE"/>
</dbReference>
<dbReference type="PRINTS" id="PR00821">
    <property type="entry name" value="TAGLIPASE"/>
</dbReference>
<dbReference type="SMART" id="SM00308">
    <property type="entry name" value="LH2"/>
    <property type="match status" value="1"/>
</dbReference>
<dbReference type="SUPFAM" id="SSF53474">
    <property type="entry name" value="alpha/beta-Hydrolases"/>
    <property type="match status" value="1"/>
</dbReference>
<dbReference type="SUPFAM" id="SSF49723">
    <property type="entry name" value="Lipase/lipooxygenase domain (PLAT/LH2 domain)"/>
    <property type="match status" value="1"/>
</dbReference>
<dbReference type="PROSITE" id="PS00120">
    <property type="entry name" value="LIPASE_SER"/>
    <property type="match status" value="1"/>
</dbReference>
<dbReference type="PROSITE" id="PS50095">
    <property type="entry name" value="PLAT"/>
    <property type="match status" value="1"/>
</dbReference>
<name>LIPG_RAT</name>
<proteinExistence type="evidence at transcript level"/>
<reference key="1">
    <citation type="journal article" date="2005" name="Cardiovasc. Res.">
        <title>Increased expression of endothelial lipase in rat models of hypertension.</title>
        <authorList>
            <person name="Shimokawa Y."/>
            <person name="Hirata K."/>
            <person name="Ishida T."/>
            <person name="Kojima Y."/>
            <person name="Inoue N."/>
            <person name="Quertermous T."/>
            <person name="Yokoyama M."/>
        </authorList>
    </citation>
    <scope>NUCLEOTIDE SEQUENCE [MRNA]</scope>
    <source>
        <strain>Sprague-Dawley</strain>
        <tissue>Aortic smooth muscle</tissue>
    </source>
</reference>
<reference key="2">
    <citation type="journal article" date="2001" name="DNA Seq.">
        <title>Sequencing and chromosomal assignment of the rat endothelial-derived lipase gene (Lipg).</title>
        <authorList>
            <person name="Bonne A.C.M."/>
            <person name="den Bieman M.G."/>
            <person name="van Lith H."/>
            <person name="van Zutphen B.F.M."/>
        </authorList>
    </citation>
    <scope>NUCLEOTIDE SEQUENCE [GENOMIC DNA] OF 214-293</scope>
    <source>
        <strain>BN-Lx/Cub</strain>
        <strain>SHR/OlaIpcv</strain>
    </source>
</reference>
<accession>Q8VBX1</accession>
<accession>Q5D216</accession>